<reference key="1">
    <citation type="submission" date="2006-01" db="EMBL/GenBank/DDBJ databases">
        <authorList>
            <consortium name="NIH - Mammalian Gene Collection (MGC) project"/>
        </authorList>
    </citation>
    <scope>NUCLEOTIDE SEQUENCE [LARGE SCALE MRNA]</scope>
    <source>
        <strain>Hereford</strain>
        <tissue>Hypothalamus</tissue>
    </source>
</reference>
<name>ITPA_BOVIN</name>
<gene>
    <name evidence="2" type="primary">ITPA</name>
</gene>
<feature type="initiator methionine" description="Removed" evidence="2">
    <location>
        <position position="1"/>
    </location>
</feature>
<feature type="chain" id="PRO_0000306869" description="Inosine triphosphate pyrophosphatase">
    <location>
        <begin position="2"/>
        <end position="208"/>
    </location>
</feature>
<feature type="binding site" evidence="2">
    <location>
        <begin position="14"/>
        <end position="19"/>
    </location>
    <ligand>
        <name>ITP</name>
        <dbReference type="ChEBI" id="CHEBI:61402"/>
    </ligand>
</feature>
<feature type="binding site" evidence="2">
    <location>
        <position position="44"/>
    </location>
    <ligand>
        <name>Mg(2+)</name>
        <dbReference type="ChEBI" id="CHEBI:18420"/>
    </ligand>
</feature>
<feature type="binding site" evidence="2">
    <location>
        <position position="56"/>
    </location>
    <ligand>
        <name>ITP</name>
        <dbReference type="ChEBI" id="CHEBI:61402"/>
    </ligand>
</feature>
<feature type="binding site" evidence="2">
    <location>
        <begin position="72"/>
        <end position="73"/>
    </location>
    <ligand>
        <name>ITP</name>
        <dbReference type="ChEBI" id="CHEBI:61402"/>
    </ligand>
</feature>
<feature type="binding site" evidence="2">
    <location>
        <position position="89"/>
    </location>
    <ligand>
        <name>ITP</name>
        <dbReference type="ChEBI" id="CHEBI:61402"/>
    </ligand>
</feature>
<feature type="binding site" evidence="2">
    <location>
        <begin position="149"/>
        <end position="152"/>
    </location>
    <ligand>
        <name>ITP</name>
        <dbReference type="ChEBI" id="CHEBI:61402"/>
    </ligand>
</feature>
<feature type="binding site" evidence="2">
    <location>
        <position position="172"/>
    </location>
    <ligand>
        <name>ITP</name>
        <dbReference type="ChEBI" id="CHEBI:61402"/>
    </ligand>
</feature>
<feature type="binding site" evidence="2">
    <location>
        <begin position="177"/>
        <end position="178"/>
    </location>
    <ligand>
        <name>ITP</name>
        <dbReference type="ChEBI" id="CHEBI:61402"/>
    </ligand>
</feature>
<feature type="modified residue" description="N-acetylalanine" evidence="1 2">
    <location>
        <position position="2"/>
    </location>
</feature>
<comment type="function">
    <text evidence="2">Pyrophosphatase that hydrolyzes the non-canonical purine nucleotides inosine triphosphate (ITP), deoxyinosine triphosphate (dITP) as well as 2'-deoxy-N-6-hydroxylaminopurine triphosphate (dHAPTP) and xanthosine 5'-triphosphate (XTP) to their respective monophosphate derivatives. The enzyme does not distinguish between the deoxy- and ribose forms. Probably excludes non-canonical purines from RNA and DNA precursor pools, thus preventing their incorporation into RNA and DNA and avoiding chromosomal lesions.</text>
</comment>
<comment type="catalytic activity">
    <reaction evidence="2">
        <text>ITP + H2O = IMP + diphosphate + H(+)</text>
        <dbReference type="Rhea" id="RHEA:29399"/>
        <dbReference type="ChEBI" id="CHEBI:15377"/>
        <dbReference type="ChEBI" id="CHEBI:15378"/>
        <dbReference type="ChEBI" id="CHEBI:33019"/>
        <dbReference type="ChEBI" id="CHEBI:58053"/>
        <dbReference type="ChEBI" id="CHEBI:61402"/>
        <dbReference type="EC" id="3.6.1.66"/>
    </reaction>
    <physiologicalReaction direction="left-to-right" evidence="2">
        <dbReference type="Rhea" id="RHEA:29400"/>
    </physiologicalReaction>
</comment>
<comment type="catalytic activity">
    <reaction evidence="2">
        <text>dITP + H2O = dIMP + diphosphate + H(+)</text>
        <dbReference type="Rhea" id="RHEA:28342"/>
        <dbReference type="ChEBI" id="CHEBI:15377"/>
        <dbReference type="ChEBI" id="CHEBI:15378"/>
        <dbReference type="ChEBI" id="CHEBI:33019"/>
        <dbReference type="ChEBI" id="CHEBI:61194"/>
        <dbReference type="ChEBI" id="CHEBI:61382"/>
        <dbReference type="EC" id="3.6.1.66"/>
    </reaction>
    <physiologicalReaction direction="left-to-right" evidence="2">
        <dbReference type="Rhea" id="RHEA:28343"/>
    </physiologicalReaction>
</comment>
<comment type="catalytic activity">
    <reaction evidence="2">
        <text>XTP + H2O = XMP + diphosphate + H(+)</text>
        <dbReference type="Rhea" id="RHEA:28610"/>
        <dbReference type="ChEBI" id="CHEBI:15377"/>
        <dbReference type="ChEBI" id="CHEBI:15378"/>
        <dbReference type="ChEBI" id="CHEBI:33019"/>
        <dbReference type="ChEBI" id="CHEBI:57464"/>
        <dbReference type="ChEBI" id="CHEBI:61314"/>
        <dbReference type="EC" id="3.6.1.66"/>
    </reaction>
    <physiologicalReaction direction="left-to-right" evidence="2">
        <dbReference type="Rhea" id="RHEA:28611"/>
    </physiologicalReaction>
</comment>
<comment type="catalytic activity">
    <reaction evidence="2">
        <text>N(6)-hydroxy-dATP + H2O = N(6)-hydroxy-dAMP + diphosphate + H(+)</text>
        <dbReference type="Rhea" id="RHEA:83971"/>
        <dbReference type="ChEBI" id="CHEBI:15377"/>
        <dbReference type="ChEBI" id="CHEBI:15378"/>
        <dbReference type="ChEBI" id="CHEBI:33019"/>
        <dbReference type="ChEBI" id="CHEBI:233529"/>
        <dbReference type="ChEBI" id="CHEBI:233530"/>
    </reaction>
    <physiologicalReaction direction="left-to-right" evidence="2">
        <dbReference type="Rhea" id="RHEA:83972"/>
    </physiologicalReaction>
</comment>
<comment type="cofactor">
    <cofactor evidence="2">
        <name>Mg(2+)</name>
        <dbReference type="ChEBI" id="CHEBI:18420"/>
    </cofactor>
    <cofactor evidence="2">
        <name>Mn(2+)</name>
        <dbReference type="ChEBI" id="CHEBI:29035"/>
    </cofactor>
    <text evidence="2">Binds 1 divalent metal cation per subunit; can use either Mg(2+) or Mn(2+).</text>
</comment>
<comment type="subunit">
    <text evidence="2">Homodimer.</text>
</comment>
<comment type="subcellular location">
    <subcellularLocation>
        <location evidence="2">Cytoplasm</location>
    </subcellularLocation>
</comment>
<comment type="similarity">
    <text evidence="2">Belongs to the HAM1 NTPase family.</text>
</comment>
<dbReference type="EC" id="3.6.1.66" evidence="2"/>
<dbReference type="EMBL" id="BC112688">
    <property type="protein sequence ID" value="AAI12689.1"/>
    <property type="molecule type" value="mRNA"/>
</dbReference>
<dbReference type="RefSeq" id="NP_001069750.1">
    <property type="nucleotide sequence ID" value="NM_001076282.2"/>
</dbReference>
<dbReference type="SMR" id="Q2KIC5"/>
<dbReference type="FunCoup" id="Q2KIC5">
    <property type="interactions" value="3289"/>
</dbReference>
<dbReference type="STRING" id="9913.ENSBTAP00000072806"/>
<dbReference type="PaxDb" id="9913-ENSBTAP00000018301"/>
<dbReference type="GeneID" id="613653"/>
<dbReference type="KEGG" id="bta:613653"/>
<dbReference type="CTD" id="3704"/>
<dbReference type="VEuPathDB" id="HostDB:ENSBTAG00000013776"/>
<dbReference type="eggNOG" id="KOG3222">
    <property type="taxonomic scope" value="Eukaryota"/>
</dbReference>
<dbReference type="HOGENOM" id="CLU_082080_1_1_1"/>
<dbReference type="InParanoid" id="Q2KIC5"/>
<dbReference type="OrthoDB" id="6288734at2759"/>
<dbReference type="TreeFam" id="TF105614"/>
<dbReference type="Reactome" id="R-BTA-74259">
    <property type="pathway name" value="Purine catabolism"/>
</dbReference>
<dbReference type="Reactome" id="R-BTA-9755088">
    <property type="pathway name" value="Ribavirin ADME"/>
</dbReference>
<dbReference type="Proteomes" id="UP000009136">
    <property type="component" value="Chromosome 13"/>
</dbReference>
<dbReference type="Bgee" id="ENSBTAG00000013776">
    <property type="expression patterns" value="Expressed in anterior segment of eyeball and 104 other cell types or tissues"/>
</dbReference>
<dbReference type="GO" id="GO:0005737">
    <property type="term" value="C:cytoplasm"/>
    <property type="evidence" value="ECO:0000318"/>
    <property type="project" value="GO_Central"/>
</dbReference>
<dbReference type="GO" id="GO:0035870">
    <property type="term" value="F:dITP diphosphatase activity"/>
    <property type="evidence" value="ECO:0007669"/>
    <property type="project" value="RHEA"/>
</dbReference>
<dbReference type="GO" id="GO:0036220">
    <property type="term" value="F:ITP diphosphatase activity"/>
    <property type="evidence" value="ECO:0007669"/>
    <property type="project" value="RHEA"/>
</dbReference>
<dbReference type="GO" id="GO:0046872">
    <property type="term" value="F:metal ion binding"/>
    <property type="evidence" value="ECO:0007669"/>
    <property type="project" value="UniProtKB-KW"/>
</dbReference>
<dbReference type="GO" id="GO:0047429">
    <property type="term" value="F:nucleoside triphosphate diphosphatase activity"/>
    <property type="evidence" value="ECO:0000318"/>
    <property type="project" value="GO_Central"/>
</dbReference>
<dbReference type="GO" id="GO:0000166">
    <property type="term" value="F:nucleotide binding"/>
    <property type="evidence" value="ECO:0007669"/>
    <property type="project" value="UniProtKB-KW"/>
</dbReference>
<dbReference type="GO" id="GO:0036222">
    <property type="term" value="F:XTP diphosphatase activity"/>
    <property type="evidence" value="ECO:0007669"/>
    <property type="project" value="RHEA"/>
</dbReference>
<dbReference type="GO" id="GO:0009204">
    <property type="term" value="P:deoxyribonucleoside triphosphate catabolic process"/>
    <property type="evidence" value="ECO:0007669"/>
    <property type="project" value="UniProtKB-UniRule"/>
</dbReference>
<dbReference type="GO" id="GO:0009143">
    <property type="term" value="P:nucleoside triphosphate catabolic process"/>
    <property type="evidence" value="ECO:0000318"/>
    <property type="project" value="GO_Central"/>
</dbReference>
<dbReference type="GO" id="GO:0009117">
    <property type="term" value="P:nucleotide metabolic process"/>
    <property type="evidence" value="ECO:0007669"/>
    <property type="project" value="UniProtKB-KW"/>
</dbReference>
<dbReference type="CDD" id="cd00515">
    <property type="entry name" value="HAM1"/>
    <property type="match status" value="1"/>
</dbReference>
<dbReference type="FunFam" id="3.90.950.10:FF:000003">
    <property type="entry name" value="Inosine triphosphate pyrophosphatase"/>
    <property type="match status" value="1"/>
</dbReference>
<dbReference type="Gene3D" id="3.90.950.10">
    <property type="match status" value="1"/>
</dbReference>
<dbReference type="HAMAP" id="MF_03148">
    <property type="entry name" value="HAM1_NTPase"/>
    <property type="match status" value="1"/>
</dbReference>
<dbReference type="InterPro" id="IPR027502">
    <property type="entry name" value="ITPase"/>
</dbReference>
<dbReference type="InterPro" id="IPR029001">
    <property type="entry name" value="ITPase-like_fam"/>
</dbReference>
<dbReference type="InterPro" id="IPR002637">
    <property type="entry name" value="RdgB/HAM1"/>
</dbReference>
<dbReference type="NCBIfam" id="TIGR00042">
    <property type="entry name" value="RdgB/HAM1 family non-canonical purine NTP pyrophosphatase"/>
    <property type="match status" value="1"/>
</dbReference>
<dbReference type="PANTHER" id="PTHR11067:SF9">
    <property type="entry name" value="INOSINE TRIPHOSPHATE PYROPHOSPHATASE"/>
    <property type="match status" value="1"/>
</dbReference>
<dbReference type="PANTHER" id="PTHR11067">
    <property type="entry name" value="INOSINE TRIPHOSPHATE PYROPHOSPHATASE/HAM1 PROTEIN"/>
    <property type="match status" value="1"/>
</dbReference>
<dbReference type="Pfam" id="PF01725">
    <property type="entry name" value="Ham1p_like"/>
    <property type="match status" value="1"/>
</dbReference>
<dbReference type="SUPFAM" id="SSF52972">
    <property type="entry name" value="ITPase-like"/>
    <property type="match status" value="1"/>
</dbReference>
<proteinExistence type="evidence at transcript level"/>
<keyword id="KW-0007">Acetylation</keyword>
<keyword id="KW-0963">Cytoplasm</keyword>
<keyword id="KW-0378">Hydrolase</keyword>
<keyword id="KW-0460">Magnesium</keyword>
<keyword id="KW-0464">Manganese</keyword>
<keyword id="KW-0479">Metal-binding</keyword>
<keyword id="KW-0546">Nucleotide metabolism</keyword>
<keyword id="KW-0547">Nucleotide-binding</keyword>
<keyword id="KW-1185">Reference proteome</keyword>
<sequence length="208" mass="23061">MAASLAGKKIVFVTGNAKKLEEVIQILGDKFPCTLVAQKIDLPEYQGEPDEISIRKCQEAARQVQGPVLVEDTCLCFNALGGLPGPYIKWFLEKLKPEGLHQLLEGFQDKSAYALCTFAFSTGDPNEPVRLFRGRTMGRIVVPRGCRDFGWDPCFQPDGYEQTYAEMPKAEKNTISHRFRALLALQEYFSSLTPGVGDDHPSWGSGEG</sequence>
<accession>Q2KIC5</accession>
<protein>
    <recommendedName>
        <fullName evidence="2">Inosine triphosphate pyrophosphatase</fullName>
        <shortName evidence="2">ITPase</shortName>
        <shortName evidence="2">Inosine triphosphatase</shortName>
        <ecNumber evidence="2">3.6.1.66</ecNumber>
    </recommendedName>
    <alternativeName>
        <fullName evidence="2">Non-canonical purine NTP pyrophosphatase</fullName>
    </alternativeName>
    <alternativeName>
        <fullName evidence="2">Non-standard purine NTP pyrophosphatase</fullName>
    </alternativeName>
    <alternativeName>
        <fullName evidence="2">Nucleoside-triphosphate diphosphatase</fullName>
    </alternativeName>
    <alternativeName>
        <fullName evidence="2">Nucleoside-triphosphate pyrophosphatase</fullName>
        <shortName evidence="2">NTPase</shortName>
    </alternativeName>
    <alternativeName>
        <fullName evidence="2">XTP/dITP diphosphatase</fullName>
    </alternativeName>
</protein>
<organism>
    <name type="scientific">Bos taurus</name>
    <name type="common">Bovine</name>
    <dbReference type="NCBI Taxonomy" id="9913"/>
    <lineage>
        <taxon>Eukaryota</taxon>
        <taxon>Metazoa</taxon>
        <taxon>Chordata</taxon>
        <taxon>Craniata</taxon>
        <taxon>Vertebrata</taxon>
        <taxon>Euteleostomi</taxon>
        <taxon>Mammalia</taxon>
        <taxon>Eutheria</taxon>
        <taxon>Laurasiatheria</taxon>
        <taxon>Artiodactyla</taxon>
        <taxon>Ruminantia</taxon>
        <taxon>Pecora</taxon>
        <taxon>Bovidae</taxon>
        <taxon>Bovinae</taxon>
        <taxon>Bos</taxon>
    </lineage>
</organism>
<evidence type="ECO:0000250" key="1">
    <source>
        <dbReference type="UniProtKB" id="Q9BY32"/>
    </source>
</evidence>
<evidence type="ECO:0000255" key="2">
    <source>
        <dbReference type="HAMAP-Rule" id="MF_03148"/>
    </source>
</evidence>